<sequence>MSDKSNDGGENDSLPMDNININSIDDENNNDINNQDDNENNNNNNNNKNSDDNEENLKDYKNKKEDFGNIKMDTIDDRPTNNGILSPIDITSDGGDSVKTLSTTQSKKLDEGEKKEGEVGPQVPFFSLFRFAKPFDILLMIIGTIGALANGVSMPAISIVFGRLMNSFSPENLADPNFDLVETVTSNAMYFIYIGCGVFVCSYVEVAFWMLAGERQAVRCRKAYLKAILKQEIGWYDVTKSSELSTRISSDTLLFQEAIGEKIGNFLHHTSTFICGFIVGFVNGWQLTLVIFALTPLIAAAGAFMTKMMADLTKKGQDAYAKAGGVAEEKIGSIRTVSTFSGEPFEVKRYTERLKEALDIGTKKGIMNGIGIGLVFLVLFGTYSLSFWYGGKLIVDRKWNPVPDRPWQGGDVLTVFFSVIMGAMALGQASPNVASFANGRGAAFKIYEVVDRNSKIDPFSTEGRSIEETVQGNIEYRNIGFSYPSRPDVKIFNNFNLTIKKGTTVALVGDSGGGKSSVIGLLERFYDPDEGEVYLDGTNIKEINIHSLRRNIGLVSQEPVLFANSIAENIRYGNENATMDQIIEACKTANAHDFISALPEGYDTQVGEKGVQMSGGQKQRIAIARAMIKDPKILLLDEATSALDSQNELLVQQSIEKLMIGRTTIVIAHRLSTIQDADQIAVVKGGAIVEIGTHPELYALNGVYTQLVNRQQKGGDDGDKKKKKKSKESSKDESNNNIGPSSISIDKSIQSIGADSLETSTIGLVNDNDNKKKKKKEKKPQEKSVPIGRILKLSRGDWPHFLIGLVGATLNGAIMPVFSIIFSEILGIFQEQDTDELTRRSRNMALWFILLAVVAALANFIQIYCFTFIGEKLTFNLRRLSFESIMRQDIGWFDLTENSTGRLTANLATEATLVQGMTSQRLGLLIQNIVTIVAGLVIAFVSGWKLTLVVLACVPVIGFAGKVEMDFFQGFSQKGKEAYAECGQVASEAIGGIRTVSSFTCENKILEKFRQCLQKPIQMSFRKSNVSGLSFGFSQCTLFFIYTLTYWYGGKLVDSGEWPAKESTLETYCYNGEYANIGYTDEATCIKSFTTTEGFSMMMRVFFAIIMSAMGVGQSMAFMPDLGKAKLAAVAIFSLIDRVSEIDPFENKGQTLPEFKGDIEFKDIKFSYPSRPNKAVFQGFNLVIPHGKKVALVGNSGGGKSSVISLLERFYNPSQGSITIDGVNIKDLNLNWLRGNMGLVGQEPFLFSGTIFENIIYGKPDATMDEVVEAAKAANAHTFIESLPDAYHTQLGDKFTQLSGGQKQRVAIARAIIRNPKVLLLDEATSALDTVSEKVVQVALDNVSKGRTSIVIAHRLSTVIDADLIVVVKEGKVVELGTHETLLAENGFYAELVSRQM</sequence>
<reference key="1">
    <citation type="journal article" date="2002" name="Eukaryot. Cell">
        <title>Evolutionary analyses of ABC transporters of Dictyostelium discoideum.</title>
        <authorList>
            <person name="Anjard C."/>
            <person name="Loomis W.F."/>
        </authorList>
    </citation>
    <scope>NUCLEOTIDE SEQUENCE [GENOMIC DNA]</scope>
    <scope>NOMENCLATURE</scope>
    <source>
        <strain>AX4</strain>
    </source>
</reference>
<reference key="2">
    <citation type="journal article" date="2005" name="Nature">
        <title>The genome of the social amoeba Dictyostelium discoideum.</title>
        <authorList>
            <person name="Eichinger L."/>
            <person name="Pachebat J.A."/>
            <person name="Gloeckner G."/>
            <person name="Rajandream M.A."/>
            <person name="Sucgang R."/>
            <person name="Berriman M."/>
            <person name="Song J."/>
            <person name="Olsen R."/>
            <person name="Szafranski K."/>
            <person name="Xu Q."/>
            <person name="Tunggal B."/>
            <person name="Kummerfeld S."/>
            <person name="Madera M."/>
            <person name="Konfortov B.A."/>
            <person name="Rivero F."/>
            <person name="Bankier A.T."/>
            <person name="Lehmann R."/>
            <person name="Hamlin N."/>
            <person name="Davies R."/>
            <person name="Gaudet P."/>
            <person name="Fey P."/>
            <person name="Pilcher K."/>
            <person name="Chen G."/>
            <person name="Saunders D."/>
            <person name="Sodergren E.J."/>
            <person name="Davis P."/>
            <person name="Kerhornou A."/>
            <person name="Nie X."/>
            <person name="Hall N."/>
            <person name="Anjard C."/>
            <person name="Hemphill L."/>
            <person name="Bason N."/>
            <person name="Farbrother P."/>
            <person name="Desany B."/>
            <person name="Just E."/>
            <person name="Morio T."/>
            <person name="Rost R."/>
            <person name="Churcher C.M."/>
            <person name="Cooper J."/>
            <person name="Haydock S."/>
            <person name="van Driessche N."/>
            <person name="Cronin A."/>
            <person name="Goodhead I."/>
            <person name="Muzny D.M."/>
            <person name="Mourier T."/>
            <person name="Pain A."/>
            <person name="Lu M."/>
            <person name="Harper D."/>
            <person name="Lindsay R."/>
            <person name="Hauser H."/>
            <person name="James K.D."/>
            <person name="Quiles M."/>
            <person name="Madan Babu M."/>
            <person name="Saito T."/>
            <person name="Buchrieser C."/>
            <person name="Wardroper A."/>
            <person name="Felder M."/>
            <person name="Thangavelu M."/>
            <person name="Johnson D."/>
            <person name="Knights A."/>
            <person name="Loulseged H."/>
            <person name="Mungall K.L."/>
            <person name="Oliver K."/>
            <person name="Price C."/>
            <person name="Quail M.A."/>
            <person name="Urushihara H."/>
            <person name="Hernandez J."/>
            <person name="Rabbinowitsch E."/>
            <person name="Steffen D."/>
            <person name="Sanders M."/>
            <person name="Ma J."/>
            <person name="Kohara Y."/>
            <person name="Sharp S."/>
            <person name="Simmonds M.N."/>
            <person name="Spiegler S."/>
            <person name="Tivey A."/>
            <person name="Sugano S."/>
            <person name="White B."/>
            <person name="Walker D."/>
            <person name="Woodward J.R."/>
            <person name="Winckler T."/>
            <person name="Tanaka Y."/>
            <person name="Shaulsky G."/>
            <person name="Schleicher M."/>
            <person name="Weinstock G.M."/>
            <person name="Rosenthal A."/>
            <person name="Cox E.C."/>
            <person name="Chisholm R.L."/>
            <person name="Gibbs R.A."/>
            <person name="Loomis W.F."/>
            <person name="Platzer M."/>
            <person name="Kay R.R."/>
            <person name="Williams J.G."/>
            <person name="Dear P.H."/>
            <person name="Noegel A.A."/>
            <person name="Barrell B.G."/>
            <person name="Kuspa A."/>
        </authorList>
    </citation>
    <scope>NUCLEOTIDE SEQUENCE [LARGE SCALE GENOMIC DNA]</scope>
    <source>
        <strain>AX4</strain>
    </source>
</reference>
<comment type="subcellular location">
    <subcellularLocation>
        <location evidence="3">Membrane</location>
        <topology evidence="3">Multi-pass membrane protein</topology>
    </subcellularLocation>
</comment>
<comment type="similarity">
    <text evidence="5">Belongs to the ABC transporter superfamily. ABCB family. Multidrug resistance exporter (TC 3.A.1.201) subfamily.</text>
</comment>
<comment type="sequence caution" evidence="5">
    <conflict type="erroneous gene model prediction">
        <sequence resource="EMBL-CDS" id="AAL74249"/>
    </conflict>
</comment>
<organism>
    <name type="scientific">Dictyostelium discoideum</name>
    <name type="common">Social amoeba</name>
    <dbReference type="NCBI Taxonomy" id="44689"/>
    <lineage>
        <taxon>Eukaryota</taxon>
        <taxon>Amoebozoa</taxon>
        <taxon>Evosea</taxon>
        <taxon>Eumycetozoa</taxon>
        <taxon>Dictyostelia</taxon>
        <taxon>Dictyosteliales</taxon>
        <taxon>Dictyosteliaceae</taxon>
        <taxon>Dictyostelium</taxon>
    </lineage>
</organism>
<proteinExistence type="inferred from homology"/>
<accession>Q54BT3</accession>
<accession>Q8T9W5</accession>
<name>ABCB2_DICDI</name>
<protein>
    <recommendedName>
        <fullName>ABC transporter B family member 2</fullName>
    </recommendedName>
    <alternativeName>
        <fullName>ABC transporter ABCB.2</fullName>
    </alternativeName>
</protein>
<dbReference type="EMBL" id="AF466305">
    <property type="protein sequence ID" value="AAL74249.1"/>
    <property type="status" value="ALT_SEQ"/>
    <property type="molecule type" value="Genomic_DNA"/>
</dbReference>
<dbReference type="EMBL" id="AAFI02000210">
    <property type="protein sequence ID" value="EAL60721.1"/>
    <property type="molecule type" value="Genomic_DNA"/>
</dbReference>
<dbReference type="RefSeq" id="XP_629136.1">
    <property type="nucleotide sequence ID" value="XM_629134.1"/>
</dbReference>
<dbReference type="SMR" id="Q54BT3"/>
<dbReference type="FunCoup" id="Q54BT3">
    <property type="interactions" value="37"/>
</dbReference>
<dbReference type="STRING" id="44689.Q54BT3"/>
<dbReference type="PaxDb" id="44689-DDB0201670"/>
<dbReference type="EnsemblProtists" id="EAL60721">
    <property type="protein sequence ID" value="EAL60721"/>
    <property type="gene ID" value="DDB_G0293438"/>
</dbReference>
<dbReference type="GeneID" id="8629226"/>
<dbReference type="KEGG" id="ddi:DDB_G0293438"/>
<dbReference type="dictyBase" id="DDB_G0293438">
    <property type="gene designation" value="abcB2"/>
</dbReference>
<dbReference type="VEuPathDB" id="AmoebaDB:DDB_G0293438"/>
<dbReference type="eggNOG" id="KOG0055">
    <property type="taxonomic scope" value="Eukaryota"/>
</dbReference>
<dbReference type="HOGENOM" id="CLU_000604_17_2_1"/>
<dbReference type="InParanoid" id="Q54BT3"/>
<dbReference type="OMA" id="GFGQEEQ"/>
<dbReference type="PhylomeDB" id="Q54BT3"/>
<dbReference type="Reactome" id="R-DDI-1369007">
    <property type="pathway name" value="Mitochondrial ABC transporters"/>
</dbReference>
<dbReference type="Reactome" id="R-DDI-159418">
    <property type="pathway name" value="Recycling of bile acids and salts"/>
</dbReference>
<dbReference type="Reactome" id="R-DDI-193368">
    <property type="pathway name" value="Synthesis of bile acids and bile salts via 7alpha-hydroxycholesterol"/>
</dbReference>
<dbReference type="Reactome" id="R-DDI-382556">
    <property type="pathway name" value="ABC-family proteins mediated transport"/>
</dbReference>
<dbReference type="Reactome" id="R-DDI-9754706">
    <property type="pathway name" value="Atorvastatin ADME"/>
</dbReference>
<dbReference type="Reactome" id="R-DDI-9757110">
    <property type="pathway name" value="Prednisone ADME"/>
</dbReference>
<dbReference type="PRO" id="PR:Q54BT3"/>
<dbReference type="Proteomes" id="UP000002195">
    <property type="component" value="Chromosome 6"/>
</dbReference>
<dbReference type="GO" id="GO:0016020">
    <property type="term" value="C:membrane"/>
    <property type="evidence" value="ECO:0000318"/>
    <property type="project" value="GO_Central"/>
</dbReference>
<dbReference type="GO" id="GO:0140359">
    <property type="term" value="F:ABC-type transporter activity"/>
    <property type="evidence" value="ECO:0007669"/>
    <property type="project" value="InterPro"/>
</dbReference>
<dbReference type="GO" id="GO:0005524">
    <property type="term" value="F:ATP binding"/>
    <property type="evidence" value="ECO:0007669"/>
    <property type="project" value="UniProtKB-KW"/>
</dbReference>
<dbReference type="GO" id="GO:0016887">
    <property type="term" value="F:ATP hydrolysis activity"/>
    <property type="evidence" value="ECO:0007669"/>
    <property type="project" value="InterPro"/>
</dbReference>
<dbReference type="GO" id="GO:0042626">
    <property type="term" value="F:ATPase-coupled transmembrane transporter activity"/>
    <property type="evidence" value="ECO:0000318"/>
    <property type="project" value="GO_Central"/>
</dbReference>
<dbReference type="GO" id="GO:0055085">
    <property type="term" value="P:transmembrane transport"/>
    <property type="evidence" value="ECO:0000318"/>
    <property type="project" value="GO_Central"/>
</dbReference>
<dbReference type="CDD" id="cd18577">
    <property type="entry name" value="ABC_6TM_Pgp_ABCB1_D1_like"/>
    <property type="match status" value="1"/>
</dbReference>
<dbReference type="CDD" id="cd18578">
    <property type="entry name" value="ABC_6TM_Pgp_ABCB1_D2_like"/>
    <property type="match status" value="1"/>
</dbReference>
<dbReference type="CDD" id="cd03249">
    <property type="entry name" value="ABC_MTABC3_MDL1_MDL2"/>
    <property type="match status" value="2"/>
</dbReference>
<dbReference type="FunFam" id="1.20.1560.10:FF:000009">
    <property type="entry name" value="ABC transporter B family member 1"/>
    <property type="match status" value="1"/>
</dbReference>
<dbReference type="FunFam" id="3.40.50.300:FF:000251">
    <property type="entry name" value="ABC transporter B family member 19"/>
    <property type="match status" value="1"/>
</dbReference>
<dbReference type="FunFam" id="3.40.50.300:FF:000205">
    <property type="entry name" value="ABC transporter B family member 4"/>
    <property type="match status" value="1"/>
</dbReference>
<dbReference type="FunFam" id="1.20.1560.10:FF:000163">
    <property type="entry name" value="ABC transporter B family protein"/>
    <property type="match status" value="1"/>
</dbReference>
<dbReference type="FunFam" id="1.20.1560.10:FF:000018">
    <property type="entry name" value="ATP-binding cassette subfamily B member 11"/>
    <property type="match status" value="1"/>
</dbReference>
<dbReference type="Gene3D" id="1.20.1560.10">
    <property type="entry name" value="ABC transporter type 1, transmembrane domain"/>
    <property type="match status" value="2"/>
</dbReference>
<dbReference type="Gene3D" id="3.40.50.300">
    <property type="entry name" value="P-loop containing nucleotide triphosphate hydrolases"/>
    <property type="match status" value="2"/>
</dbReference>
<dbReference type="InterPro" id="IPR003593">
    <property type="entry name" value="AAA+_ATPase"/>
</dbReference>
<dbReference type="InterPro" id="IPR011527">
    <property type="entry name" value="ABC1_TM_dom"/>
</dbReference>
<dbReference type="InterPro" id="IPR036640">
    <property type="entry name" value="ABC1_TM_sf"/>
</dbReference>
<dbReference type="InterPro" id="IPR003439">
    <property type="entry name" value="ABC_transporter-like_ATP-bd"/>
</dbReference>
<dbReference type="InterPro" id="IPR017871">
    <property type="entry name" value="ABC_transporter-like_CS"/>
</dbReference>
<dbReference type="InterPro" id="IPR027417">
    <property type="entry name" value="P-loop_NTPase"/>
</dbReference>
<dbReference type="InterPro" id="IPR039421">
    <property type="entry name" value="Type_1_exporter"/>
</dbReference>
<dbReference type="PANTHER" id="PTHR43394">
    <property type="entry name" value="ATP-DEPENDENT PERMEASE MDL1, MITOCHONDRIAL"/>
    <property type="match status" value="1"/>
</dbReference>
<dbReference type="PANTHER" id="PTHR43394:SF27">
    <property type="entry name" value="ATP-DEPENDENT TRANSLOCASE ABCB1-LIKE"/>
    <property type="match status" value="1"/>
</dbReference>
<dbReference type="Pfam" id="PF00664">
    <property type="entry name" value="ABC_membrane"/>
    <property type="match status" value="2"/>
</dbReference>
<dbReference type="Pfam" id="PF00005">
    <property type="entry name" value="ABC_tran"/>
    <property type="match status" value="2"/>
</dbReference>
<dbReference type="SMART" id="SM00382">
    <property type="entry name" value="AAA"/>
    <property type="match status" value="2"/>
</dbReference>
<dbReference type="SUPFAM" id="SSF90123">
    <property type="entry name" value="ABC transporter transmembrane region"/>
    <property type="match status" value="2"/>
</dbReference>
<dbReference type="SUPFAM" id="SSF52540">
    <property type="entry name" value="P-loop containing nucleoside triphosphate hydrolases"/>
    <property type="match status" value="2"/>
</dbReference>
<dbReference type="PROSITE" id="PS50929">
    <property type="entry name" value="ABC_TM1F"/>
    <property type="match status" value="2"/>
</dbReference>
<dbReference type="PROSITE" id="PS00211">
    <property type="entry name" value="ABC_TRANSPORTER_1"/>
    <property type="match status" value="2"/>
</dbReference>
<dbReference type="PROSITE" id="PS50893">
    <property type="entry name" value="ABC_TRANSPORTER_2"/>
    <property type="match status" value="2"/>
</dbReference>
<gene>
    <name type="primary">abcB2</name>
    <name type="ORF">DDB_G0293438</name>
</gene>
<evidence type="ECO:0000255" key="1"/>
<evidence type="ECO:0000255" key="2">
    <source>
        <dbReference type="PROSITE-ProRule" id="PRU00434"/>
    </source>
</evidence>
<evidence type="ECO:0000255" key="3">
    <source>
        <dbReference type="PROSITE-ProRule" id="PRU00441"/>
    </source>
</evidence>
<evidence type="ECO:0000256" key="4">
    <source>
        <dbReference type="SAM" id="MobiDB-lite"/>
    </source>
</evidence>
<evidence type="ECO:0000305" key="5"/>
<feature type="chain" id="PRO_0000391323" description="ABC transporter B family member 2">
    <location>
        <begin position="1"/>
        <end position="1397"/>
    </location>
</feature>
<feature type="transmembrane region" description="Helical" evidence="3">
    <location>
        <begin position="137"/>
        <end position="157"/>
    </location>
</feature>
<feature type="transmembrane region" description="Helical" evidence="3">
    <location>
        <begin position="191"/>
        <end position="211"/>
    </location>
</feature>
<feature type="transmembrane region" description="Helical" evidence="3">
    <location>
        <begin position="273"/>
        <end position="293"/>
    </location>
</feature>
<feature type="transmembrane region" description="Helical" evidence="3">
    <location>
        <begin position="369"/>
        <end position="389"/>
    </location>
</feature>
<feature type="transmembrane region" description="Helical" evidence="3">
    <location>
        <begin position="407"/>
        <end position="427"/>
    </location>
</feature>
<feature type="transmembrane region" description="Helical" evidence="3">
    <location>
        <begin position="801"/>
        <end position="821"/>
    </location>
</feature>
<feature type="transmembrane region" description="Helical" evidence="3">
    <location>
        <begin position="846"/>
        <end position="866"/>
    </location>
</feature>
<feature type="transmembrane region" description="Helical" evidence="3">
    <location>
        <begin position="922"/>
        <end position="942"/>
    </location>
</feature>
<feature type="transmembrane region" description="Helical" evidence="3">
    <location>
        <begin position="948"/>
        <end position="968"/>
    </location>
</feature>
<feature type="transmembrane region" description="Helical" evidence="3">
    <location>
        <begin position="1028"/>
        <end position="1048"/>
    </location>
</feature>
<feature type="transmembrane region" description="Helical" evidence="3">
    <location>
        <begin position="1101"/>
        <end position="1121"/>
    </location>
</feature>
<feature type="domain" description="ABC transmembrane type-1 1" evidence="3">
    <location>
        <begin position="140"/>
        <end position="438"/>
    </location>
</feature>
<feature type="domain" description="ABC transporter 1" evidence="2">
    <location>
        <begin position="474"/>
        <end position="710"/>
    </location>
</feature>
<feature type="domain" description="ABC transmembrane type-1 2" evidence="3">
    <location>
        <begin position="801"/>
        <end position="1124"/>
    </location>
</feature>
<feature type="domain" description="ABC transporter 2" evidence="2">
    <location>
        <begin position="1159"/>
        <end position="1395"/>
    </location>
</feature>
<feature type="region of interest" description="Disordered" evidence="4">
    <location>
        <begin position="1"/>
        <end position="117"/>
    </location>
</feature>
<feature type="region of interest" description="Disordered" evidence="4">
    <location>
        <begin position="710"/>
        <end position="744"/>
    </location>
</feature>
<feature type="region of interest" description="Disordered" evidence="4">
    <location>
        <begin position="763"/>
        <end position="783"/>
    </location>
</feature>
<feature type="coiled-coil region" evidence="1">
    <location>
        <begin position="37"/>
        <end position="69"/>
    </location>
</feature>
<feature type="compositionally biased region" description="Acidic residues" evidence="4">
    <location>
        <begin position="24"/>
        <end position="39"/>
    </location>
</feature>
<feature type="compositionally biased region" description="Basic and acidic residues" evidence="4">
    <location>
        <begin position="49"/>
        <end position="79"/>
    </location>
</feature>
<feature type="compositionally biased region" description="Basic and acidic residues" evidence="4">
    <location>
        <begin position="107"/>
        <end position="117"/>
    </location>
</feature>
<feature type="compositionally biased region" description="Low complexity" evidence="4">
    <location>
        <begin position="735"/>
        <end position="744"/>
    </location>
</feature>
<feature type="binding site" evidence="2">
    <location>
        <begin position="509"/>
        <end position="516"/>
    </location>
    <ligand>
        <name>ATP</name>
        <dbReference type="ChEBI" id="CHEBI:30616"/>
    </ligand>
</feature>
<feature type="binding site" evidence="2">
    <location>
        <begin position="1194"/>
        <end position="1201"/>
    </location>
    <ligand>
        <name>ATP</name>
        <dbReference type="ChEBI" id="CHEBI:30616"/>
    </ligand>
</feature>
<keyword id="KW-0067">ATP-binding</keyword>
<keyword id="KW-0175">Coiled coil</keyword>
<keyword id="KW-0472">Membrane</keyword>
<keyword id="KW-0547">Nucleotide-binding</keyword>
<keyword id="KW-1185">Reference proteome</keyword>
<keyword id="KW-0677">Repeat</keyword>
<keyword id="KW-0812">Transmembrane</keyword>
<keyword id="KW-1133">Transmembrane helix</keyword>
<keyword id="KW-0813">Transport</keyword>